<protein>
    <recommendedName>
        <fullName evidence="1">Methionyl-tRNA formyltransferase</fullName>
        <ecNumber evidence="1">2.1.2.9</ecNumber>
    </recommendedName>
</protein>
<feature type="chain" id="PRO_0000083012" description="Methionyl-tRNA formyltransferase">
    <location>
        <begin position="1"/>
        <end position="323"/>
    </location>
</feature>
<feature type="binding site" evidence="1">
    <location>
        <begin position="113"/>
        <end position="116"/>
    </location>
    <ligand>
        <name>(6S)-5,6,7,8-tetrahydrofolate</name>
        <dbReference type="ChEBI" id="CHEBI:57453"/>
    </ligand>
</feature>
<organism>
    <name type="scientific">Porphyromonas gingivalis (strain ATCC BAA-308 / W83)</name>
    <dbReference type="NCBI Taxonomy" id="242619"/>
    <lineage>
        <taxon>Bacteria</taxon>
        <taxon>Pseudomonadati</taxon>
        <taxon>Bacteroidota</taxon>
        <taxon>Bacteroidia</taxon>
        <taxon>Bacteroidales</taxon>
        <taxon>Porphyromonadaceae</taxon>
        <taxon>Porphyromonas</taxon>
    </lineage>
</organism>
<proteinExistence type="inferred from homology"/>
<gene>
    <name evidence="1" type="primary">fmt</name>
    <name type="ordered locus">PG_2023</name>
</gene>
<accession>Q7MTE3</accession>
<comment type="function">
    <text evidence="1">Attaches a formyl group to the free amino group of methionyl-tRNA(fMet). The formyl group appears to play a dual role in the initiator identity of N-formylmethionyl-tRNA by promoting its recognition by IF2 and preventing the misappropriation of this tRNA by the elongation apparatus.</text>
</comment>
<comment type="catalytic activity">
    <reaction evidence="1">
        <text>L-methionyl-tRNA(fMet) + (6R)-10-formyltetrahydrofolate = N-formyl-L-methionyl-tRNA(fMet) + (6S)-5,6,7,8-tetrahydrofolate + H(+)</text>
        <dbReference type="Rhea" id="RHEA:24380"/>
        <dbReference type="Rhea" id="RHEA-COMP:9952"/>
        <dbReference type="Rhea" id="RHEA-COMP:9953"/>
        <dbReference type="ChEBI" id="CHEBI:15378"/>
        <dbReference type="ChEBI" id="CHEBI:57453"/>
        <dbReference type="ChEBI" id="CHEBI:78530"/>
        <dbReference type="ChEBI" id="CHEBI:78844"/>
        <dbReference type="ChEBI" id="CHEBI:195366"/>
        <dbReference type="EC" id="2.1.2.9"/>
    </reaction>
</comment>
<comment type="similarity">
    <text evidence="1">Belongs to the Fmt family.</text>
</comment>
<dbReference type="EC" id="2.1.2.9" evidence="1"/>
<dbReference type="EMBL" id="AE015924">
    <property type="protein sequence ID" value="AAQ66990.1"/>
    <property type="molecule type" value="Genomic_DNA"/>
</dbReference>
<dbReference type="RefSeq" id="WP_005874858.1">
    <property type="nucleotide sequence ID" value="NC_002950.2"/>
</dbReference>
<dbReference type="SMR" id="Q7MTE3"/>
<dbReference type="STRING" id="242619.PG_2023"/>
<dbReference type="EnsemblBacteria" id="AAQ66990">
    <property type="protein sequence ID" value="AAQ66990"/>
    <property type="gene ID" value="PG_2023"/>
</dbReference>
<dbReference type="KEGG" id="pgi:PG_2023"/>
<dbReference type="eggNOG" id="COG0223">
    <property type="taxonomic scope" value="Bacteria"/>
</dbReference>
<dbReference type="HOGENOM" id="CLU_033347_1_1_10"/>
<dbReference type="Proteomes" id="UP000000588">
    <property type="component" value="Chromosome"/>
</dbReference>
<dbReference type="GO" id="GO:0005829">
    <property type="term" value="C:cytosol"/>
    <property type="evidence" value="ECO:0007669"/>
    <property type="project" value="TreeGrafter"/>
</dbReference>
<dbReference type="GO" id="GO:0004479">
    <property type="term" value="F:methionyl-tRNA formyltransferase activity"/>
    <property type="evidence" value="ECO:0007669"/>
    <property type="project" value="UniProtKB-UniRule"/>
</dbReference>
<dbReference type="CDD" id="cd08646">
    <property type="entry name" value="FMT_core_Met-tRNA-FMT_N"/>
    <property type="match status" value="1"/>
</dbReference>
<dbReference type="CDD" id="cd08704">
    <property type="entry name" value="Met_tRNA_FMT_C"/>
    <property type="match status" value="1"/>
</dbReference>
<dbReference type="Gene3D" id="3.40.50.12230">
    <property type="match status" value="1"/>
</dbReference>
<dbReference type="HAMAP" id="MF_00182">
    <property type="entry name" value="Formyl_trans"/>
    <property type="match status" value="1"/>
</dbReference>
<dbReference type="InterPro" id="IPR005794">
    <property type="entry name" value="Fmt"/>
</dbReference>
<dbReference type="InterPro" id="IPR005793">
    <property type="entry name" value="Formyl_trans_C"/>
</dbReference>
<dbReference type="InterPro" id="IPR002376">
    <property type="entry name" value="Formyl_transf_N"/>
</dbReference>
<dbReference type="InterPro" id="IPR036477">
    <property type="entry name" value="Formyl_transf_N_sf"/>
</dbReference>
<dbReference type="InterPro" id="IPR011034">
    <property type="entry name" value="Formyl_transferase-like_C_sf"/>
</dbReference>
<dbReference type="InterPro" id="IPR044135">
    <property type="entry name" value="Met-tRNA-FMT_C"/>
</dbReference>
<dbReference type="InterPro" id="IPR041711">
    <property type="entry name" value="Met-tRNA-FMT_N"/>
</dbReference>
<dbReference type="NCBIfam" id="TIGR00460">
    <property type="entry name" value="fmt"/>
    <property type="match status" value="1"/>
</dbReference>
<dbReference type="PANTHER" id="PTHR11138">
    <property type="entry name" value="METHIONYL-TRNA FORMYLTRANSFERASE"/>
    <property type="match status" value="1"/>
</dbReference>
<dbReference type="PANTHER" id="PTHR11138:SF5">
    <property type="entry name" value="METHIONYL-TRNA FORMYLTRANSFERASE, MITOCHONDRIAL"/>
    <property type="match status" value="1"/>
</dbReference>
<dbReference type="Pfam" id="PF02911">
    <property type="entry name" value="Formyl_trans_C"/>
    <property type="match status" value="1"/>
</dbReference>
<dbReference type="Pfam" id="PF00551">
    <property type="entry name" value="Formyl_trans_N"/>
    <property type="match status" value="1"/>
</dbReference>
<dbReference type="SUPFAM" id="SSF50486">
    <property type="entry name" value="FMT C-terminal domain-like"/>
    <property type="match status" value="1"/>
</dbReference>
<dbReference type="SUPFAM" id="SSF53328">
    <property type="entry name" value="Formyltransferase"/>
    <property type="match status" value="1"/>
</dbReference>
<reference key="1">
    <citation type="journal article" date="2003" name="J. Bacteriol.">
        <title>Complete genome sequence of the oral pathogenic bacterium Porphyromonas gingivalis strain W83.</title>
        <authorList>
            <person name="Nelson K.E."/>
            <person name="Fleischmann R.D."/>
            <person name="DeBoy R.T."/>
            <person name="Paulsen I.T."/>
            <person name="Fouts D.E."/>
            <person name="Eisen J.A."/>
            <person name="Daugherty S.C."/>
            <person name="Dodson R.J."/>
            <person name="Durkin A.S."/>
            <person name="Gwinn M.L."/>
            <person name="Haft D.H."/>
            <person name="Kolonay J.F."/>
            <person name="Nelson W.C."/>
            <person name="Mason T.M."/>
            <person name="Tallon L."/>
            <person name="Gray J."/>
            <person name="Granger D."/>
            <person name="Tettelin H."/>
            <person name="Dong H."/>
            <person name="Galvin J.L."/>
            <person name="Duncan M.J."/>
            <person name="Dewhirst F.E."/>
            <person name="Fraser C.M."/>
        </authorList>
    </citation>
    <scope>NUCLEOTIDE SEQUENCE [LARGE SCALE GENOMIC DNA]</scope>
    <source>
        <strain>ATCC BAA-308 / W83</strain>
    </source>
</reference>
<name>FMT_PORGI</name>
<keyword id="KW-0648">Protein biosynthesis</keyword>
<keyword id="KW-1185">Reference proteome</keyword>
<keyword id="KW-0808">Transferase</keyword>
<evidence type="ECO:0000255" key="1">
    <source>
        <dbReference type="HAMAP-Rule" id="MF_00182"/>
    </source>
</evidence>
<sequence length="323" mass="36742">MKKEELRLIFMGTADFAVPALRALVENGYQVKAVVTMPDKPMGRGHKVSPSMVKLYAQELGLPILQPDNLNEESFLDELRTYQPHLQIVVAFRMLPRSVWQMPPMGTINLHGSLLPMYRGAAPINHAIRHGDTETGVTTFRLRHEIDTGEVLLQEKLPIGHEETFGELYERMATLGASVLVHTVDLFLEGEPVSIPQEQLPGYVDARPAPKIFKDDCRIDWDKPAEEVHNFIRSISPAPTAWTKLHRPRMESIVLKIYRTQVIEREPRHRGRFGSIIWDKKNLDVMTRKGVIRILSLQMPGKKQMDAASFLNGFALSSDMYIE</sequence>